<reference key="1">
    <citation type="journal article" date="1998" name="Plant Mol. Biol.">
        <title>Arabidopsis thaliana contains a large family of germin-like proteins: characterization of cDNA and genomic sequences encoding 12 unique family members.</title>
        <authorList>
            <person name="Carter C."/>
            <person name="Graham R.A."/>
            <person name="Thornburg R.W."/>
        </authorList>
    </citation>
    <scope>NUCLEOTIDE SEQUENCE [MRNA]</scope>
    <source>
        <strain>cv. Columbia</strain>
    </source>
</reference>
<reference key="2">
    <citation type="journal article" date="2000" name="Nature">
        <title>Sequence and analysis of chromosome 1 of the plant Arabidopsis thaliana.</title>
        <authorList>
            <person name="Theologis A."/>
            <person name="Ecker J.R."/>
            <person name="Palm C.J."/>
            <person name="Federspiel N.A."/>
            <person name="Kaul S."/>
            <person name="White O."/>
            <person name="Alonso J."/>
            <person name="Altafi H."/>
            <person name="Araujo R."/>
            <person name="Bowman C.L."/>
            <person name="Brooks S.Y."/>
            <person name="Buehler E."/>
            <person name="Chan A."/>
            <person name="Chao Q."/>
            <person name="Chen H."/>
            <person name="Cheuk R.F."/>
            <person name="Chin C.W."/>
            <person name="Chung M.K."/>
            <person name="Conn L."/>
            <person name="Conway A.B."/>
            <person name="Conway A.R."/>
            <person name="Creasy T.H."/>
            <person name="Dewar K."/>
            <person name="Dunn P."/>
            <person name="Etgu P."/>
            <person name="Feldblyum T.V."/>
            <person name="Feng J.-D."/>
            <person name="Fong B."/>
            <person name="Fujii C.Y."/>
            <person name="Gill J.E."/>
            <person name="Goldsmith A.D."/>
            <person name="Haas B."/>
            <person name="Hansen N.F."/>
            <person name="Hughes B."/>
            <person name="Huizar L."/>
            <person name="Hunter J.L."/>
            <person name="Jenkins J."/>
            <person name="Johnson-Hopson C."/>
            <person name="Khan S."/>
            <person name="Khaykin E."/>
            <person name="Kim C.J."/>
            <person name="Koo H.L."/>
            <person name="Kremenetskaia I."/>
            <person name="Kurtz D.B."/>
            <person name="Kwan A."/>
            <person name="Lam B."/>
            <person name="Langin-Hooper S."/>
            <person name="Lee A."/>
            <person name="Lee J.M."/>
            <person name="Lenz C.A."/>
            <person name="Li J.H."/>
            <person name="Li Y.-P."/>
            <person name="Lin X."/>
            <person name="Liu S.X."/>
            <person name="Liu Z.A."/>
            <person name="Luros J.S."/>
            <person name="Maiti R."/>
            <person name="Marziali A."/>
            <person name="Militscher J."/>
            <person name="Miranda M."/>
            <person name="Nguyen M."/>
            <person name="Nierman W.C."/>
            <person name="Osborne B.I."/>
            <person name="Pai G."/>
            <person name="Peterson J."/>
            <person name="Pham P.K."/>
            <person name="Rizzo M."/>
            <person name="Rooney T."/>
            <person name="Rowley D."/>
            <person name="Sakano H."/>
            <person name="Salzberg S.L."/>
            <person name="Schwartz J.R."/>
            <person name="Shinn P."/>
            <person name="Southwick A.M."/>
            <person name="Sun H."/>
            <person name="Tallon L.J."/>
            <person name="Tambunga G."/>
            <person name="Toriumi M.J."/>
            <person name="Town C.D."/>
            <person name="Utterback T."/>
            <person name="Van Aken S."/>
            <person name="Vaysberg M."/>
            <person name="Vysotskaia V.S."/>
            <person name="Walker M."/>
            <person name="Wu D."/>
            <person name="Yu G."/>
            <person name="Fraser C.M."/>
            <person name="Venter J.C."/>
            <person name="Davis R.W."/>
        </authorList>
    </citation>
    <scope>NUCLEOTIDE SEQUENCE [LARGE SCALE GENOMIC DNA]</scope>
    <source>
        <strain>cv. Columbia</strain>
    </source>
</reference>
<reference key="3">
    <citation type="journal article" date="2017" name="Plant J.">
        <title>Araport11: a complete reannotation of the Arabidopsis thaliana reference genome.</title>
        <authorList>
            <person name="Cheng C.Y."/>
            <person name="Krishnakumar V."/>
            <person name="Chan A.P."/>
            <person name="Thibaud-Nissen F."/>
            <person name="Schobel S."/>
            <person name="Town C.D."/>
        </authorList>
    </citation>
    <scope>GENOME REANNOTATION</scope>
    <source>
        <strain>cv. Columbia</strain>
    </source>
</reference>
<reference key="4">
    <citation type="journal article" date="2003" name="Science">
        <title>Empirical analysis of transcriptional activity in the Arabidopsis genome.</title>
        <authorList>
            <person name="Yamada K."/>
            <person name="Lim J."/>
            <person name="Dale J.M."/>
            <person name="Chen H."/>
            <person name="Shinn P."/>
            <person name="Palm C.J."/>
            <person name="Southwick A.M."/>
            <person name="Wu H.C."/>
            <person name="Kim C.J."/>
            <person name="Nguyen M."/>
            <person name="Pham P.K."/>
            <person name="Cheuk R.F."/>
            <person name="Karlin-Newmann G."/>
            <person name="Liu S.X."/>
            <person name="Lam B."/>
            <person name="Sakano H."/>
            <person name="Wu T."/>
            <person name="Yu G."/>
            <person name="Miranda M."/>
            <person name="Quach H.L."/>
            <person name="Tripp M."/>
            <person name="Chang C.H."/>
            <person name="Lee J.M."/>
            <person name="Toriumi M.J."/>
            <person name="Chan M.M."/>
            <person name="Tang C.C."/>
            <person name="Onodera C.S."/>
            <person name="Deng J.M."/>
            <person name="Akiyama K."/>
            <person name="Ansari Y."/>
            <person name="Arakawa T."/>
            <person name="Banh J."/>
            <person name="Banno F."/>
            <person name="Bowser L."/>
            <person name="Brooks S.Y."/>
            <person name="Carninci P."/>
            <person name="Chao Q."/>
            <person name="Choy N."/>
            <person name="Enju A."/>
            <person name="Goldsmith A.D."/>
            <person name="Gurjal M."/>
            <person name="Hansen N.F."/>
            <person name="Hayashizaki Y."/>
            <person name="Johnson-Hopson C."/>
            <person name="Hsuan V.W."/>
            <person name="Iida K."/>
            <person name="Karnes M."/>
            <person name="Khan S."/>
            <person name="Koesema E."/>
            <person name="Ishida J."/>
            <person name="Jiang P.X."/>
            <person name="Jones T."/>
            <person name="Kawai J."/>
            <person name="Kamiya A."/>
            <person name="Meyers C."/>
            <person name="Nakajima M."/>
            <person name="Narusaka M."/>
            <person name="Seki M."/>
            <person name="Sakurai T."/>
            <person name="Satou M."/>
            <person name="Tamse R."/>
            <person name="Vaysberg M."/>
            <person name="Wallender E.K."/>
            <person name="Wong C."/>
            <person name="Yamamura Y."/>
            <person name="Yuan S."/>
            <person name="Shinozaki K."/>
            <person name="Davis R.W."/>
            <person name="Theologis A."/>
            <person name="Ecker J.R."/>
        </authorList>
    </citation>
    <scope>NUCLEOTIDE SEQUENCE [LARGE SCALE MRNA]</scope>
</reference>
<name>GL21_ARATH</name>
<protein>
    <recommendedName>
        <fullName>Germin-like protein subfamily 2 member 1</fullName>
    </recommendedName>
</protein>
<dbReference type="EMBL" id="U75191">
    <property type="protein sequence ID" value="AAB51569.1"/>
    <property type="status" value="ALT_SEQ"/>
    <property type="molecule type" value="mRNA"/>
</dbReference>
<dbReference type="EMBL" id="U75198">
    <property type="protein sequence ID" value="AAB51576.1"/>
    <property type="status" value="ALT_SEQ"/>
    <property type="molecule type" value="mRNA"/>
</dbReference>
<dbReference type="EMBL" id="U75199">
    <property type="protein sequence ID" value="AAB51577.1"/>
    <property type="status" value="ALT_SEQ"/>
    <property type="molecule type" value="mRNA"/>
</dbReference>
<dbReference type="EMBL" id="U75200">
    <property type="protein sequence ID" value="AAB51578.1"/>
    <property type="status" value="ALT_SEQ"/>
    <property type="molecule type" value="mRNA"/>
</dbReference>
<dbReference type="EMBL" id="AC003970">
    <property type="protein sequence ID" value="AAC33216.1"/>
    <property type="molecule type" value="Genomic_DNA"/>
</dbReference>
<dbReference type="EMBL" id="CP002684">
    <property type="protein sequence ID" value="AEE28461.1"/>
    <property type="molecule type" value="Genomic_DNA"/>
</dbReference>
<dbReference type="EMBL" id="AF326875">
    <property type="protein sequence ID" value="AAG41457.1"/>
    <property type="molecule type" value="mRNA"/>
</dbReference>
<dbReference type="EMBL" id="AF324678">
    <property type="protein sequence ID" value="AAG40029.1"/>
    <property type="molecule type" value="mRNA"/>
</dbReference>
<dbReference type="EMBL" id="AF339696">
    <property type="protein sequence ID" value="AAK00378.1"/>
    <property type="molecule type" value="mRNA"/>
</dbReference>
<dbReference type="PIR" id="C86229">
    <property type="entry name" value="C86229"/>
</dbReference>
<dbReference type="RefSeq" id="NP_172427.1">
    <property type="nucleotide sequence ID" value="NM_100827.4"/>
</dbReference>
<dbReference type="SMR" id="P94014"/>
<dbReference type="FunCoup" id="P94014">
    <property type="interactions" value="38"/>
</dbReference>
<dbReference type="STRING" id="3702.P94014"/>
<dbReference type="GlyCosmos" id="P94014">
    <property type="glycosylation" value="1 site, No reported glycans"/>
</dbReference>
<dbReference type="GlyGen" id="P94014">
    <property type="glycosylation" value="1 site"/>
</dbReference>
<dbReference type="PaxDb" id="3702-AT1G09560.1"/>
<dbReference type="ProteomicsDB" id="247392"/>
<dbReference type="EnsemblPlants" id="AT1G09560.1">
    <property type="protein sequence ID" value="AT1G09560.1"/>
    <property type="gene ID" value="AT1G09560"/>
</dbReference>
<dbReference type="GeneID" id="837482"/>
<dbReference type="Gramene" id="AT1G09560.1">
    <property type="protein sequence ID" value="AT1G09560.1"/>
    <property type="gene ID" value="AT1G09560"/>
</dbReference>
<dbReference type="KEGG" id="ath:AT1G09560"/>
<dbReference type="Araport" id="AT1G09560"/>
<dbReference type="TAIR" id="AT1G09560">
    <property type="gene designation" value="GLP5"/>
</dbReference>
<dbReference type="eggNOG" id="ENOG502QQ4A">
    <property type="taxonomic scope" value="Eukaryota"/>
</dbReference>
<dbReference type="HOGENOM" id="CLU_015790_0_3_1"/>
<dbReference type="InParanoid" id="P94014"/>
<dbReference type="OMA" id="QQHCYSR"/>
<dbReference type="PRO" id="PR:P94014"/>
<dbReference type="Proteomes" id="UP000006548">
    <property type="component" value="Chromosome 1"/>
</dbReference>
<dbReference type="ExpressionAtlas" id="P94014">
    <property type="expression patterns" value="baseline and differential"/>
</dbReference>
<dbReference type="GO" id="GO:0048046">
    <property type="term" value="C:apoplast"/>
    <property type="evidence" value="ECO:0007669"/>
    <property type="project" value="UniProtKB-SubCell"/>
</dbReference>
<dbReference type="GO" id="GO:0005634">
    <property type="term" value="C:nucleus"/>
    <property type="evidence" value="ECO:0007005"/>
    <property type="project" value="TAIR"/>
</dbReference>
<dbReference type="GO" id="GO:0009506">
    <property type="term" value="C:plasmodesma"/>
    <property type="evidence" value="ECO:0000314"/>
    <property type="project" value="TAIR"/>
</dbReference>
<dbReference type="GO" id="GO:0030145">
    <property type="term" value="F:manganese ion binding"/>
    <property type="evidence" value="ECO:0007669"/>
    <property type="project" value="InterPro"/>
</dbReference>
<dbReference type="GO" id="GO:0010497">
    <property type="term" value="P:plasmodesmata-mediated intercellular transport"/>
    <property type="evidence" value="ECO:0000315"/>
    <property type="project" value="TAIR"/>
</dbReference>
<dbReference type="GO" id="GO:2000280">
    <property type="term" value="P:regulation of root development"/>
    <property type="evidence" value="ECO:0000315"/>
    <property type="project" value="TAIR"/>
</dbReference>
<dbReference type="CDD" id="cd02241">
    <property type="entry name" value="cupin_OxOx"/>
    <property type="match status" value="1"/>
</dbReference>
<dbReference type="FunFam" id="2.60.120.10:FF:000025">
    <property type="entry name" value="germin-like protein subfamily 2 member 1"/>
    <property type="match status" value="1"/>
</dbReference>
<dbReference type="Gene3D" id="2.60.120.10">
    <property type="entry name" value="Jelly Rolls"/>
    <property type="match status" value="1"/>
</dbReference>
<dbReference type="InterPro" id="IPR006045">
    <property type="entry name" value="Cupin_1"/>
</dbReference>
<dbReference type="InterPro" id="IPR001929">
    <property type="entry name" value="Germin"/>
</dbReference>
<dbReference type="InterPro" id="IPR019780">
    <property type="entry name" value="Germin_Mn-BS"/>
</dbReference>
<dbReference type="InterPro" id="IPR014710">
    <property type="entry name" value="RmlC-like_jellyroll"/>
</dbReference>
<dbReference type="InterPro" id="IPR011051">
    <property type="entry name" value="RmlC_Cupin_sf"/>
</dbReference>
<dbReference type="PANTHER" id="PTHR31238">
    <property type="entry name" value="GERMIN-LIKE PROTEIN SUBFAMILY 3 MEMBER 3"/>
    <property type="match status" value="1"/>
</dbReference>
<dbReference type="Pfam" id="PF00190">
    <property type="entry name" value="Cupin_1"/>
    <property type="match status" value="1"/>
</dbReference>
<dbReference type="PRINTS" id="PR00325">
    <property type="entry name" value="GERMIN"/>
</dbReference>
<dbReference type="SMART" id="SM00835">
    <property type="entry name" value="Cupin_1"/>
    <property type="match status" value="1"/>
</dbReference>
<dbReference type="SUPFAM" id="SSF51182">
    <property type="entry name" value="RmlC-like cupins"/>
    <property type="match status" value="1"/>
</dbReference>
<dbReference type="PROSITE" id="PS00725">
    <property type="entry name" value="GERMIN"/>
    <property type="match status" value="1"/>
</dbReference>
<sequence length="219" mass="22868">MASPTLTLLLLLTTVSFFISSSADPDMLQDLCVADLPSGIKINGFPCKDAATVTSADFFSQGLAKPGLTNNTFGALVTGANVMTIPGLNTLGVSLSRIDYAPGGLNPPHTHPRATEVVFVLEGTLDVGFLTTANKLISQSLKKGDVFAFPKGLVHFQKNNGDVPASVIAAFNSQLPGTQSLGATLFGSTPPVPDNILAQAFQTSPGTVKHIKSKFQPKK</sequence>
<accession>P94014</accession>
<accession>F4I108</accession>
<accession>O80538</accession>
<accession>P94097</accession>
<feature type="signal peptide" evidence="2">
    <location>
        <begin position="1"/>
        <end position="21"/>
    </location>
</feature>
<feature type="chain" id="PRO_0000010821" description="Germin-like protein subfamily 2 member 1">
    <location>
        <begin position="22"/>
        <end position="219"/>
    </location>
</feature>
<feature type="domain" description="Cupin type-1" evidence="2">
    <location>
        <begin position="61"/>
        <end position="209"/>
    </location>
</feature>
<feature type="binding site" evidence="1">
    <location>
        <position position="109"/>
    </location>
    <ligand>
        <name>Mn(2+)</name>
        <dbReference type="ChEBI" id="CHEBI:29035"/>
    </ligand>
</feature>
<feature type="binding site" evidence="1">
    <location>
        <position position="111"/>
    </location>
    <ligand>
        <name>Mn(2+)</name>
        <dbReference type="ChEBI" id="CHEBI:29035"/>
    </ligand>
</feature>
<feature type="binding site" evidence="1">
    <location>
        <position position="116"/>
    </location>
    <ligand>
        <name>Mn(2+)</name>
        <dbReference type="ChEBI" id="CHEBI:29035"/>
    </ligand>
</feature>
<feature type="binding site" evidence="1">
    <location>
        <position position="155"/>
    </location>
    <ligand>
        <name>Mn(2+)</name>
        <dbReference type="ChEBI" id="CHEBI:29035"/>
    </ligand>
</feature>
<feature type="glycosylation site" description="N-linked (GlcNAc...) asparagine" evidence="2">
    <location>
        <position position="70"/>
    </location>
</feature>
<feature type="disulfide bond" evidence="1">
    <location>
        <begin position="32"/>
        <end position="47"/>
    </location>
</feature>
<organism>
    <name type="scientific">Arabidopsis thaliana</name>
    <name type="common">Mouse-ear cress</name>
    <dbReference type="NCBI Taxonomy" id="3702"/>
    <lineage>
        <taxon>Eukaryota</taxon>
        <taxon>Viridiplantae</taxon>
        <taxon>Streptophyta</taxon>
        <taxon>Embryophyta</taxon>
        <taxon>Tracheophyta</taxon>
        <taxon>Spermatophyta</taxon>
        <taxon>Magnoliopsida</taxon>
        <taxon>eudicotyledons</taxon>
        <taxon>Gunneridae</taxon>
        <taxon>Pentapetalae</taxon>
        <taxon>rosids</taxon>
        <taxon>malvids</taxon>
        <taxon>Brassicales</taxon>
        <taxon>Brassicaceae</taxon>
        <taxon>Camelineae</taxon>
        <taxon>Arabidopsis</taxon>
    </lineage>
</organism>
<gene>
    <name type="primary">GLP4</name>
    <name type="synonym">GLP5</name>
    <name type="ordered locus">At1g09560</name>
    <name type="ORF">F14J9.22</name>
</gene>
<keyword id="KW-0052">Apoplast</keyword>
<keyword id="KW-1015">Disulfide bond</keyword>
<keyword id="KW-0325">Glycoprotein</keyword>
<keyword id="KW-0464">Manganese</keyword>
<keyword id="KW-0479">Metal-binding</keyword>
<keyword id="KW-1185">Reference proteome</keyword>
<keyword id="KW-0964">Secreted</keyword>
<keyword id="KW-0732">Signal</keyword>
<comment type="function">
    <text>May play a role in plant defense. Probably has no oxalate oxidase activity even if the active site is conserved.</text>
</comment>
<comment type="subunit">
    <text evidence="1">Oligomer (believed to be a pentamer but probably hexamer).</text>
</comment>
<comment type="subcellular location">
    <subcellularLocation>
        <location evidence="1">Secreted</location>
        <location evidence="1">Extracellular space</location>
        <location evidence="1">Apoplast</location>
    </subcellularLocation>
</comment>
<comment type="similarity">
    <text evidence="3">Belongs to the germin family.</text>
</comment>
<comment type="sequence caution" evidence="3">
    <conflict type="miscellaneous discrepancy">
        <sequence resource="EMBL-CDS" id="AAB51569"/>
    </conflict>
    <text>Sequencing errors.</text>
</comment>
<comment type="sequence caution" evidence="3">
    <conflict type="miscellaneous discrepancy">
        <sequence resource="EMBL-CDS" id="AAB51576"/>
    </conflict>
    <text>Sequencing errors.</text>
</comment>
<comment type="sequence caution" evidence="3">
    <conflict type="miscellaneous discrepancy">
        <sequence resource="EMBL-CDS" id="AAB51577"/>
    </conflict>
    <text>Sequencing errors.</text>
</comment>
<comment type="sequence caution" evidence="3">
    <conflict type="miscellaneous discrepancy">
        <sequence resource="EMBL-CDS" id="AAB51578"/>
    </conflict>
    <text>Sequencing errors.</text>
</comment>
<proteinExistence type="evidence at transcript level"/>
<evidence type="ECO:0000250" key="1"/>
<evidence type="ECO:0000255" key="2"/>
<evidence type="ECO:0000305" key="3"/>